<comment type="function">
    <text evidence="4 5 6 7 8 9 12 14 15 17">Oxysterol-binding protein that mediates feedback control of cholesterol synthesis by controlling both endoplasmic reticulum to Golgi transport of SCAP and degradation of HMGCR (PubMed:12202038, PubMed:12535518, PubMed:16168377, PubMed:16399501, PubMed:16606821, PubMed:32322062). Acts as a negative regulator of cholesterol biosynthesis by mediating the retention of the SCAP-SREBP complex in the endoplasmic reticulum, thereby blocking the processing of sterol regulatory element-binding proteins (SREBPs) SREBF1/SREBP1 and SREBF2/SREBP2 (PubMed:12202038, PubMed:16399501, PubMed:26311497, PubMed:32322062). Binds oxysterol, including 25-hydroxycholesterol, regulating interaction with SCAP and retention of the SCAP-SREBP complex in the endoplasmic reticulum (PubMed:32322062). In presence of oxysterol, interacts with SCAP, retaining the SCAP-SREBP complex in the endoplasmic reticulum, thereby preventing SCAP from escorting SREBF1/SREBP1 and SREBF2/SREBP2 to the Golgi (PubMed:15899885, PubMed:32322062). Sterol deprivation or phosphorylation by PCK1 reduce oxysterol-binding, disrupting the interaction between INSIG1 and SCAP, thereby promoting Golgi transport of the SCAP-SREBP complex, followed by processing and nuclear translocation of SREBF1/SREBP1 and SREBF2/SREBP2 (PubMed:26311497, PubMed:32322062). Also regulates cholesterol synthesis by regulating degradation of HMGCR: initiates the sterol-mediated ubiquitin-mediated endoplasmic reticulum-associated degradation (ERAD) of HMGCR via recruitment of the reductase to the ubiquitin ligases AMFR/gp78 and/or RNF139 (PubMed:12535518, PubMed:16168377, PubMed:22143767). Also regulates degradation of SOAT2/ACAT2 when the lipid levels are low: initiates the ubiquitin-mediated degradation of SOAT2/ACAT2 via recruitment of the ubiquitin ligases AMFR/gp78 (PubMed:28604676).</text>
</comment>
<comment type="subunit">
    <text evidence="4 5 6 7 8 11 12 14 15 16 17">Interacts with SCAP; interaction is direct and only takes place in the presence of sterols; it prevents interaction between SCAP and the coat protein complex II (COPII) (PubMed:15899885, PubMed:32322062). Associates with the SCAP-SREBP complex (composed of SCAP and SREBF1/SREBP1 or SREBF2/SREBP2); association is mediated via its interaction with SCAP and only takes place in the presence of sterols (PubMed:12202038, PubMed:16399501, PubMed:26311497, PubMed:32322062). Interaction with SCAP is mutually exclusive with PAQR3 (PubMed:26311497). Interacts with HMGCR (via its SSD); the interaction, accelerated by sterols, leads to the recruitment of HMGCR to AMFR/gp78 for its ubiquitination by the sterol-mediated ERAD pathway (PubMed:12535518). Interacts with AMFR/gp78 (via its membrane domain); the interaction recruits HMCR at the ER membrane for its ubiquitination and degradation by the sterol-mediated ERAD pathway (PubMed:16168377, PubMed:22143767). Interacts with SOAT2/ACAT2; leading to promote recruitment of AMFR/gp78 and subsequent ubiquitination of SOAT2/ACAT2 (PubMed:28604676). Interacts with RNF139 (PubMed:20068067, PubMed:22143767). Interacts with RNF145 (PubMed:29374057).</text>
</comment>
<comment type="interaction">
    <interactant intactId="EBI-6252425">
        <id>O15503</id>
    </interactant>
    <interactant intactId="EBI-1046367">
        <id>Q9UKV5</id>
        <label>AMFR</label>
    </interactant>
    <organismsDiffer>false</organismsDiffer>
    <experiments>2</experiments>
</comment>
<comment type="interaction">
    <interactant intactId="EBI-6252425">
        <id>O15503</id>
    </interactant>
    <interactant intactId="EBI-13059134">
        <id>Q13520</id>
        <label>AQP6</label>
    </interactant>
    <organismsDiffer>false</organismsDiffer>
    <experiments>3</experiments>
</comment>
<comment type="interaction">
    <interactant intactId="EBI-6252425">
        <id>O15503</id>
    </interactant>
    <interactant intactId="EBI-10982110">
        <id>Q96Q45-2</id>
        <label>TMEM237</label>
    </interactant>
    <organismsDiffer>false</organismsDiffer>
    <experiments>3</experiments>
</comment>
<comment type="interaction">
    <interactant intactId="EBI-6252425">
        <id>O15503</id>
    </interactant>
    <interactant intactId="EBI-6251821">
        <id>P00180</id>
        <label>CYP2C1</label>
    </interactant>
    <organismsDiffer>true</organismsDiffer>
    <experiments>2</experiments>
</comment>
<comment type="interaction">
    <interactant intactId="EBI-6252425">
        <id>O15503</id>
    </interactant>
    <interactant intactId="EBI-4320576">
        <id>P00181</id>
        <label>CYP2C2</label>
    </interactant>
    <organismsDiffer>true</organismsDiffer>
    <experiments>3</experiments>
</comment>
<comment type="interaction">
    <interactant intactId="EBI-6252425">
        <id>O15503</id>
    </interactant>
    <interactant intactId="EBI-11426687">
        <id>P00347</id>
        <label>HMGCR</label>
    </interactant>
    <organismsDiffer>true</organismsDiffer>
    <experiments>2</experiments>
</comment>
<comment type="subcellular location">
    <subcellularLocation>
        <location evidence="4 17">Endoplasmic reticulum membrane</location>
        <topology evidence="4">Multi-pass membrane protein</topology>
    </subcellularLocation>
</comment>
<comment type="alternative products">
    <event type="alternative splicing"/>
    <isoform>
        <id>O15503-1</id>
        <name>1</name>
        <sequence type="displayed"/>
    </isoform>
    <isoform>
        <id>O15503-2</id>
        <name>2</name>
        <sequence type="described" ref="VSP_045084 VSP_045085"/>
    </isoform>
</comment>
<comment type="tissue specificity">
    <text evidence="4">Expressed in all tissues tested with highest expression in the liver.</text>
</comment>
<comment type="induction">
    <text evidence="8 18">By insulin (PubMed:9268630). Expressed at high levels when nuclear SREBP levels are high as a result of sterol deprivation (PubMed:16399501).</text>
</comment>
<comment type="domain">
    <text evidence="13">The KxHxx motif mediates association with the coatomer complex.</text>
</comment>
<comment type="domain">
    <text evidence="2">Binds oxysterols in a pocket within their transmembrane domains and interacts with SCAP via transmembrane domains 3 and 4.</text>
</comment>
<comment type="PTM">
    <text evidence="17">Phosphorylation at Ser-207 by PCK1 reduces binding to oxysterol, disrupting the interaction between INSIG1 and SCAP, thereby promoting nuclear translocation of SREBP proteins (SREBF1/SREBP1 or SREBF2/SREBP2) and subsequent transcription of downstream lipogenesis-related genes.</text>
</comment>
<comment type="PTM">
    <text evidence="8 10 11">Ubiquitinated by AMFR/gp78 in response to sterol deprivation, leading to its degradation: when the SCAP-SREBP complex becomes dissociated from INSIG1, INSIG1 is then ubiquitinated and degraded in proteasomes (PubMed:16399501, PubMed:17043353). Although ubiquitination is required for rapid INSIG1 degradation, it is not required for release of the SCAP-SREBP complex (PubMed:16399501). Ubiquitinated by RNF139 (PubMed:20068067).</text>
</comment>
<comment type="similarity">
    <text evidence="22">Belongs to the INSIG family.</text>
</comment>
<comment type="online information" name="Wikipedia">
    <link uri="https://en.wikipedia.org/wiki/Insig1"/>
    <text>Insig1 entry</text>
</comment>
<protein>
    <recommendedName>
        <fullName evidence="19 20">Insulin-induced gene 1 protein</fullName>
        <shortName evidence="19">INSIG-1</shortName>
    </recommendedName>
</protein>
<dbReference type="EMBL" id="U96876">
    <property type="protein sequence ID" value="AAB69121.1"/>
    <property type="molecule type" value="Genomic_DNA"/>
</dbReference>
<dbReference type="EMBL" id="AY112745">
    <property type="protein sequence ID" value="AAM44086.1"/>
    <property type="molecule type" value="mRNA"/>
</dbReference>
<dbReference type="EMBL" id="BT007227">
    <property type="protein sequence ID" value="AAP35891.1"/>
    <property type="molecule type" value="mRNA"/>
</dbReference>
<dbReference type="EMBL" id="AK291675">
    <property type="protein sequence ID" value="BAF84364.1"/>
    <property type="molecule type" value="mRNA"/>
</dbReference>
<dbReference type="EMBL" id="DN996424">
    <property type="status" value="NOT_ANNOTATED_CDS"/>
    <property type="molecule type" value="mRNA"/>
</dbReference>
<dbReference type="EMBL" id="AC144652">
    <property type="status" value="NOT_ANNOTATED_CDS"/>
    <property type="molecule type" value="Genomic_DNA"/>
</dbReference>
<dbReference type="EMBL" id="AC231970">
    <property type="status" value="NOT_ANNOTATED_CDS"/>
    <property type="molecule type" value="Genomic_DNA"/>
</dbReference>
<dbReference type="EMBL" id="CH236962">
    <property type="protein sequence ID" value="EAL23729.1"/>
    <property type="molecule type" value="Genomic_DNA"/>
</dbReference>
<dbReference type="EMBL" id="CH236962">
    <property type="protein sequence ID" value="EAL23730.1"/>
    <property type="molecule type" value="Genomic_DNA"/>
</dbReference>
<dbReference type="EMBL" id="CH471149">
    <property type="protein sequence ID" value="EAX04529.1"/>
    <property type="molecule type" value="Genomic_DNA"/>
</dbReference>
<dbReference type="EMBL" id="CH471149">
    <property type="protein sequence ID" value="EAX04530.1"/>
    <property type="molecule type" value="Genomic_DNA"/>
</dbReference>
<dbReference type="EMBL" id="BC001880">
    <property type="protein sequence ID" value="AAH01880.1"/>
    <property type="molecule type" value="mRNA"/>
</dbReference>
<dbReference type="CCDS" id="CCDS5938.1">
    <molecule id="O15503-1"/>
</dbReference>
<dbReference type="CCDS" id="CCDS5939.1">
    <molecule id="O15503-2"/>
</dbReference>
<dbReference type="RefSeq" id="NP_001333519.1">
    <property type="nucleotide sequence ID" value="NM_001346590.1"/>
</dbReference>
<dbReference type="RefSeq" id="NP_001333520.1">
    <property type="nucleotide sequence ID" value="NM_001346591.1"/>
</dbReference>
<dbReference type="RefSeq" id="NP_001333521.1">
    <molecule id="O15503-1"/>
    <property type="nucleotide sequence ID" value="NM_001346592.2"/>
</dbReference>
<dbReference type="RefSeq" id="NP_001333522.1">
    <molecule id="O15503-2"/>
    <property type="nucleotide sequence ID" value="NM_001346593.2"/>
</dbReference>
<dbReference type="RefSeq" id="NP_001333523.1">
    <property type="nucleotide sequence ID" value="NM_001346594.1"/>
</dbReference>
<dbReference type="RefSeq" id="NP_005533.2">
    <molecule id="O15503-1"/>
    <property type="nucleotide sequence ID" value="NM_005542.5"/>
</dbReference>
<dbReference type="RefSeq" id="NP_938150.2">
    <property type="nucleotide sequence ID" value="NM_198336.3"/>
</dbReference>
<dbReference type="RefSeq" id="NP_938151.1">
    <molecule id="O15503-2"/>
    <property type="nucleotide sequence ID" value="NM_198337.4"/>
</dbReference>
<dbReference type="RefSeq" id="XP_016867666.1">
    <property type="nucleotide sequence ID" value="XM_017012177.1"/>
</dbReference>
<dbReference type="PDB" id="4J81">
    <property type="method" value="X-ray"/>
    <property type="resolution" value="1.74 A"/>
    <property type="chains" value="C/D=273-277"/>
</dbReference>
<dbReference type="PDBsum" id="4J81"/>
<dbReference type="SMR" id="O15503"/>
<dbReference type="BioGRID" id="109850">
    <property type="interactions" value="128"/>
</dbReference>
<dbReference type="ComplexPortal" id="CPX-25747">
    <property type="entry name" value="SREBP-SCAP-INSIG sequestering complex, INSIG1-SREBF2 variant"/>
</dbReference>
<dbReference type="ComplexPortal" id="CPX-25750">
    <property type="entry name" value="SREBP-SCAP-INSIG sequestering complex, INSIG1-SREBF1 variant"/>
</dbReference>
<dbReference type="CORUM" id="O15503"/>
<dbReference type="DIP" id="DIP-61157N"/>
<dbReference type="FunCoup" id="O15503">
    <property type="interactions" value="498"/>
</dbReference>
<dbReference type="IntAct" id="O15503">
    <property type="interactions" value="21"/>
</dbReference>
<dbReference type="MINT" id="O15503"/>
<dbReference type="STRING" id="9606.ENSP00000344741"/>
<dbReference type="ChEMBL" id="CHEMBL4739841"/>
<dbReference type="TCDB" id="9.B.418.1.2">
    <property type="family name" value="the insulin-induced gene 1 &amp; 2 protein (insig) family"/>
</dbReference>
<dbReference type="iPTMnet" id="O15503"/>
<dbReference type="PhosphoSitePlus" id="O15503"/>
<dbReference type="BioMuta" id="INSIG1"/>
<dbReference type="jPOST" id="O15503"/>
<dbReference type="MassIVE" id="O15503"/>
<dbReference type="PaxDb" id="9606-ENSP00000344741"/>
<dbReference type="PeptideAtlas" id="O15503"/>
<dbReference type="ProteomicsDB" id="48699">
    <molecule id="O15503-1"/>
</dbReference>
<dbReference type="ProteomicsDB" id="647"/>
<dbReference type="Antibodypedia" id="33108">
    <property type="antibodies" value="215 antibodies from 22 providers"/>
</dbReference>
<dbReference type="DNASU" id="3638"/>
<dbReference type="Ensembl" id="ENST00000340368.9">
    <molecule id="O15503-1"/>
    <property type="protein sequence ID" value="ENSP00000344741.4"/>
    <property type="gene ID" value="ENSG00000186480.13"/>
</dbReference>
<dbReference type="Ensembl" id="ENST00000342407.5">
    <molecule id="O15503-2"/>
    <property type="protein sequence ID" value="ENSP00000344035.5"/>
    <property type="gene ID" value="ENSG00000186480.13"/>
</dbReference>
<dbReference type="GeneID" id="3638"/>
<dbReference type="KEGG" id="hsa:3638"/>
<dbReference type="MANE-Select" id="ENST00000340368.9">
    <property type="protein sequence ID" value="ENSP00000344741.4"/>
    <property type="RefSeq nucleotide sequence ID" value="NM_005542.6"/>
    <property type="RefSeq protein sequence ID" value="NP_005533.2"/>
</dbReference>
<dbReference type="UCSC" id="uc003wly.3">
    <molecule id="O15503-1"/>
    <property type="organism name" value="human"/>
</dbReference>
<dbReference type="AGR" id="HGNC:6083"/>
<dbReference type="CTD" id="3638"/>
<dbReference type="DisGeNET" id="3638"/>
<dbReference type="GeneCards" id="INSIG1"/>
<dbReference type="HGNC" id="HGNC:6083">
    <property type="gene designation" value="INSIG1"/>
</dbReference>
<dbReference type="HPA" id="ENSG00000186480">
    <property type="expression patterns" value="Tissue enriched (liver)"/>
</dbReference>
<dbReference type="MIM" id="602055">
    <property type="type" value="gene"/>
</dbReference>
<dbReference type="neXtProt" id="NX_O15503"/>
<dbReference type="OpenTargets" id="ENSG00000186480"/>
<dbReference type="PharmGKB" id="PA29890"/>
<dbReference type="VEuPathDB" id="HostDB:ENSG00000186480"/>
<dbReference type="eggNOG" id="KOG4363">
    <property type="taxonomic scope" value="Eukaryota"/>
</dbReference>
<dbReference type="GeneTree" id="ENSGT00580000081600"/>
<dbReference type="HOGENOM" id="CLU_092922_0_0_1"/>
<dbReference type="InParanoid" id="O15503"/>
<dbReference type="OMA" id="ENHTWSC"/>
<dbReference type="OrthoDB" id="205546at2759"/>
<dbReference type="PAN-GO" id="O15503">
    <property type="GO annotations" value="6 GO annotations based on evolutionary models"/>
</dbReference>
<dbReference type="PhylomeDB" id="O15503"/>
<dbReference type="TreeFam" id="TF331013"/>
<dbReference type="PathwayCommons" id="O15503"/>
<dbReference type="Reactome" id="R-HSA-1655829">
    <property type="pathway name" value="Regulation of cholesterol biosynthesis by SREBP (SREBF)"/>
</dbReference>
<dbReference type="SignaLink" id="O15503"/>
<dbReference type="SIGNOR" id="O15503"/>
<dbReference type="BioGRID-ORCS" id="3638">
    <property type="hits" value="22 hits in 1153 CRISPR screens"/>
</dbReference>
<dbReference type="ChiTaRS" id="INSIG1">
    <property type="organism name" value="human"/>
</dbReference>
<dbReference type="EvolutionaryTrace" id="O15503"/>
<dbReference type="GeneWiki" id="INSIG1"/>
<dbReference type="GenomeRNAi" id="3638"/>
<dbReference type="Pharos" id="O15503">
    <property type="development level" value="Tbio"/>
</dbReference>
<dbReference type="PRO" id="PR:O15503"/>
<dbReference type="Proteomes" id="UP000005640">
    <property type="component" value="Chromosome 7"/>
</dbReference>
<dbReference type="RNAct" id="O15503">
    <property type="molecule type" value="protein"/>
</dbReference>
<dbReference type="Bgee" id="ENSG00000186480">
    <property type="expression patterns" value="Expressed in cartilage tissue and 207 other cell types or tissues"/>
</dbReference>
<dbReference type="ExpressionAtlas" id="O15503">
    <property type="expression patterns" value="baseline and differential"/>
</dbReference>
<dbReference type="GO" id="GO:0005783">
    <property type="term" value="C:endoplasmic reticulum"/>
    <property type="evidence" value="ECO:0000314"/>
    <property type="project" value="UniProtKB"/>
</dbReference>
<dbReference type="GO" id="GO:0005789">
    <property type="term" value="C:endoplasmic reticulum membrane"/>
    <property type="evidence" value="ECO:0000314"/>
    <property type="project" value="UniProt"/>
</dbReference>
<dbReference type="GO" id="GO:0032937">
    <property type="term" value="C:SREBP-SCAP-Insig complex"/>
    <property type="evidence" value="ECO:0000314"/>
    <property type="project" value="UniProtKB"/>
</dbReference>
<dbReference type="GO" id="GO:0008142">
    <property type="term" value="F:oxysterol binding"/>
    <property type="evidence" value="ECO:0000314"/>
    <property type="project" value="UniProtKB"/>
</dbReference>
<dbReference type="GO" id="GO:0140311">
    <property type="term" value="F:protein sequestering activity"/>
    <property type="evidence" value="ECO:0000314"/>
    <property type="project" value="UniProt"/>
</dbReference>
<dbReference type="GO" id="GO:0032869">
    <property type="term" value="P:cellular response to insulin stimulus"/>
    <property type="evidence" value="ECO:0000318"/>
    <property type="project" value="GO_Central"/>
</dbReference>
<dbReference type="GO" id="GO:0036315">
    <property type="term" value="P:cellular response to sterol"/>
    <property type="evidence" value="ECO:0000315"/>
    <property type="project" value="UniProtKB"/>
</dbReference>
<dbReference type="GO" id="GO:0006695">
    <property type="term" value="P:cholesterol biosynthetic process"/>
    <property type="evidence" value="ECO:0000314"/>
    <property type="project" value="UniProtKB"/>
</dbReference>
<dbReference type="GO" id="GO:0042632">
    <property type="term" value="P:cholesterol homeostasis"/>
    <property type="evidence" value="ECO:0000314"/>
    <property type="project" value="UniProtKB"/>
</dbReference>
<dbReference type="GO" id="GO:0060363">
    <property type="term" value="P:cranial suture morphogenesis"/>
    <property type="evidence" value="ECO:0007669"/>
    <property type="project" value="Ensembl"/>
</dbReference>
<dbReference type="GO" id="GO:0042472">
    <property type="term" value="P:inner ear morphogenesis"/>
    <property type="evidence" value="ECO:0007669"/>
    <property type="project" value="Ensembl"/>
</dbReference>
<dbReference type="GO" id="GO:0042474">
    <property type="term" value="P:middle ear morphogenesis"/>
    <property type="evidence" value="ECO:0007669"/>
    <property type="project" value="Ensembl"/>
</dbReference>
<dbReference type="GO" id="GO:1901303">
    <property type="term" value="P:negative regulation of cargo loading into COPII-coated vesicle"/>
    <property type="evidence" value="ECO:0000315"/>
    <property type="project" value="UniProtKB"/>
</dbReference>
<dbReference type="GO" id="GO:0045541">
    <property type="term" value="P:negative regulation of cholesterol biosynthetic process"/>
    <property type="evidence" value="ECO:0000314"/>
    <property type="project" value="UniProt"/>
</dbReference>
<dbReference type="GO" id="GO:0045599">
    <property type="term" value="P:negative regulation of fat cell differentiation"/>
    <property type="evidence" value="ECO:0007669"/>
    <property type="project" value="Ensembl"/>
</dbReference>
<dbReference type="GO" id="GO:0045717">
    <property type="term" value="P:negative regulation of fatty acid biosynthetic process"/>
    <property type="evidence" value="ECO:0007669"/>
    <property type="project" value="Ensembl"/>
</dbReference>
<dbReference type="GO" id="GO:0070862">
    <property type="term" value="P:negative regulation of protein exit from endoplasmic reticulum"/>
    <property type="evidence" value="ECO:0000314"/>
    <property type="project" value="UniProtKB"/>
</dbReference>
<dbReference type="GO" id="GO:0060021">
    <property type="term" value="P:roof of mouth development"/>
    <property type="evidence" value="ECO:0007669"/>
    <property type="project" value="Ensembl"/>
</dbReference>
<dbReference type="GO" id="GO:0032933">
    <property type="term" value="P:SREBP signaling pathway"/>
    <property type="evidence" value="ECO:0000314"/>
    <property type="project" value="UniProtKB"/>
</dbReference>
<dbReference type="GO" id="GO:0036316">
    <property type="term" value="P:SREBP-SCAP complex retention in endoplasmic reticulum"/>
    <property type="evidence" value="ECO:0000314"/>
    <property type="project" value="UniProtKB"/>
</dbReference>
<dbReference type="GO" id="GO:0006641">
    <property type="term" value="P:triglyceride metabolic process"/>
    <property type="evidence" value="ECO:0007669"/>
    <property type="project" value="Ensembl"/>
</dbReference>
<dbReference type="InterPro" id="IPR025929">
    <property type="entry name" value="INSIG_fam"/>
</dbReference>
<dbReference type="PANTHER" id="PTHR15301">
    <property type="entry name" value="INSULIN-INDUCED GENE 1"/>
    <property type="match status" value="1"/>
</dbReference>
<dbReference type="PANTHER" id="PTHR15301:SF11">
    <property type="entry name" value="INSULIN-INDUCED GENE 1 PROTEIN"/>
    <property type="match status" value="1"/>
</dbReference>
<dbReference type="Pfam" id="PF07281">
    <property type="entry name" value="INSIG"/>
    <property type="match status" value="1"/>
</dbReference>
<evidence type="ECO:0000250" key="1">
    <source>
        <dbReference type="UniProtKB" id="A1T557"/>
    </source>
</evidence>
<evidence type="ECO:0000250" key="2">
    <source>
        <dbReference type="UniProtKB" id="Q9Y5U4"/>
    </source>
</evidence>
<evidence type="ECO:0000256" key="3">
    <source>
        <dbReference type="SAM" id="MobiDB-lite"/>
    </source>
</evidence>
<evidence type="ECO:0000269" key="4">
    <source>
    </source>
</evidence>
<evidence type="ECO:0000269" key="5">
    <source>
    </source>
</evidence>
<evidence type="ECO:0000269" key="6">
    <source>
    </source>
</evidence>
<evidence type="ECO:0000269" key="7">
    <source>
    </source>
</evidence>
<evidence type="ECO:0000269" key="8">
    <source>
    </source>
</evidence>
<evidence type="ECO:0000269" key="9">
    <source>
    </source>
</evidence>
<evidence type="ECO:0000269" key="10">
    <source>
    </source>
</evidence>
<evidence type="ECO:0000269" key="11">
    <source>
    </source>
</evidence>
<evidence type="ECO:0000269" key="12">
    <source>
    </source>
</evidence>
<evidence type="ECO:0000269" key="13">
    <source>
    </source>
</evidence>
<evidence type="ECO:0000269" key="14">
    <source>
    </source>
</evidence>
<evidence type="ECO:0000269" key="15">
    <source>
    </source>
</evidence>
<evidence type="ECO:0000269" key="16">
    <source>
    </source>
</evidence>
<evidence type="ECO:0000269" key="17">
    <source>
    </source>
</evidence>
<evidence type="ECO:0000269" key="18">
    <source>
    </source>
</evidence>
<evidence type="ECO:0000303" key="19">
    <source>
    </source>
</evidence>
<evidence type="ECO:0000303" key="20">
    <source>
    </source>
</evidence>
<evidence type="ECO:0000303" key="21">
    <source ref="5"/>
</evidence>
<evidence type="ECO:0000305" key="22"/>
<evidence type="ECO:0000305" key="23">
    <source>
    </source>
</evidence>
<evidence type="ECO:0000312" key="24">
    <source>
        <dbReference type="HGNC" id="HGNC:6083"/>
    </source>
</evidence>
<organism>
    <name type="scientific">Homo sapiens</name>
    <name type="common">Human</name>
    <dbReference type="NCBI Taxonomy" id="9606"/>
    <lineage>
        <taxon>Eukaryota</taxon>
        <taxon>Metazoa</taxon>
        <taxon>Chordata</taxon>
        <taxon>Craniata</taxon>
        <taxon>Vertebrata</taxon>
        <taxon>Euteleostomi</taxon>
        <taxon>Mammalia</taxon>
        <taxon>Eutheria</taxon>
        <taxon>Euarchontoglires</taxon>
        <taxon>Primates</taxon>
        <taxon>Haplorrhini</taxon>
        <taxon>Catarrhini</taxon>
        <taxon>Hominidae</taxon>
        <taxon>Homo</taxon>
    </lineage>
</organism>
<accession>O15503</accession>
<accession>A4D2N1</accession>
<accession>A8K6L0</accession>
<accession>Q53XW8</accession>
<accession>Q9BUV5</accession>
<sequence>MPRLHDHFWSCSCAHSARRRGPPRASAAGLAAKVGEMINVSVSGPSLLAAHGAPDADPAPRGRSAAMSGPEPGSPYPNTWHHRLLQRSLVLFSVGVVLALVLNLLQIQRNVTLFPEEVIATIFSSAWWVPPCCGTAAAVVGLLYPCIDSHLGEPHKFKREWASVMRCIAVFVGINHASAKLDFANNVQLSLTLAALSLGLWWTFDRSRSGLGLGITIAFLATLITQFLVYNGVYQYTSPDFLYIRSWLPCIFFSGGVTVGNIGRQLAMGVPEKPHSD</sequence>
<feature type="chain" id="PRO_0000191675" description="Insulin-induced gene 1 protein">
    <location>
        <begin position="1"/>
        <end position="277"/>
    </location>
</feature>
<feature type="topological domain" description="Cytoplasmic" evidence="23">
    <location>
        <begin position="1"/>
        <end position="84"/>
    </location>
</feature>
<feature type="transmembrane region" description="Helical; Name=1" evidence="1">
    <location>
        <begin position="85"/>
        <end position="107"/>
    </location>
</feature>
<feature type="topological domain" description="Lumenal" evidence="22">
    <location>
        <begin position="108"/>
        <end position="126"/>
    </location>
</feature>
<feature type="transmembrane region" description="Helical; Name=2" evidence="1">
    <location>
        <begin position="127"/>
        <end position="144"/>
    </location>
</feature>
<feature type="topological domain" description="Cytoplasmic" evidence="22">
    <location>
        <begin position="145"/>
        <end position="159"/>
    </location>
</feature>
<feature type="transmembrane region" description="Helical; Name=3" evidence="1">
    <location>
        <begin position="160"/>
        <end position="182"/>
    </location>
</feature>
<feature type="topological domain" description="Lumenal" evidence="22">
    <location>
        <begin position="183"/>
        <end position="185"/>
    </location>
</feature>
<feature type="transmembrane region" description="Helical; Name=4" evidence="1">
    <location>
        <begin position="186"/>
        <end position="204"/>
    </location>
</feature>
<feature type="topological domain" description="Cytoplasmic" evidence="23">
    <location>
        <begin position="205"/>
        <end position="209"/>
    </location>
</feature>
<feature type="transmembrane region" description="Helical; Name=5" evidence="1">
    <location>
        <begin position="210"/>
        <end position="231"/>
    </location>
</feature>
<feature type="topological domain" description="Lumenal" evidence="22">
    <location>
        <begin position="232"/>
        <end position="245"/>
    </location>
</feature>
<feature type="transmembrane region" description="Helical; Name=6" evidence="1">
    <location>
        <begin position="246"/>
        <end position="263"/>
    </location>
</feature>
<feature type="topological domain" description="Cytoplasmic" evidence="23">
    <location>
        <begin position="264"/>
        <end position="277"/>
    </location>
</feature>
<feature type="region of interest" description="Disordered" evidence="3">
    <location>
        <begin position="51"/>
        <end position="73"/>
    </location>
</feature>
<feature type="short sequence motif" description="KxHxx" evidence="13">
    <location>
        <begin position="271"/>
        <end position="277"/>
    </location>
</feature>
<feature type="compositionally biased region" description="Low complexity" evidence="3">
    <location>
        <begin position="51"/>
        <end position="66"/>
    </location>
</feature>
<feature type="site" description="Required for the recognition of 25-hydroxycholesterol" evidence="2">
    <location>
        <position position="171"/>
    </location>
</feature>
<feature type="modified residue" description="Phosphoserine; by PCK1" evidence="17">
    <location>
        <position position="207"/>
    </location>
</feature>
<feature type="cross-link" description="Glycyl lysine isopeptide (Lys-Gly) (interchain with G-Cter in ubiquitin)" evidence="8">
    <location>
        <position position="156"/>
    </location>
</feature>
<feature type="cross-link" description="Glycyl lysine isopeptide (Lys-Gly) (interchain with G-Cter in ubiquitin)" evidence="8">
    <location>
        <position position="158"/>
    </location>
</feature>
<feature type="splice variant" id="VSP_045084" description="In isoform 2." evidence="21">
    <original>AVVGLLYPCIDSHLGEPHKFKREWASV</original>
    <variation>GIHPQISSIFVLGSLVYFSQEASRWGT</variation>
    <location>
        <begin position="138"/>
        <end position="164"/>
    </location>
</feature>
<feature type="splice variant" id="VSP_045085" description="In isoform 2." evidence="21">
    <location>
        <begin position="165"/>
        <end position="277"/>
    </location>
</feature>
<feature type="sequence variant" id="VAR_027683" description="In dbSNP:rs1129825." evidence="18">
    <original>A</original>
    <variation>T</variation>
    <location>
        <position position="27"/>
    </location>
</feature>
<feature type="mutagenesis site" description="Loss of ubiquitination and degradation." evidence="8">
    <original>K</original>
    <variation>R</variation>
    <location>
        <position position="156"/>
    </location>
</feature>
<feature type="mutagenesis site" description="Loss of ubiquitination and degradation." evidence="8">
    <original>K</original>
    <variation>R</variation>
    <location>
        <position position="158"/>
    </location>
</feature>
<feature type="mutagenesis site" description="Loss of ability to suppress the cleavage of SREBP2 and to accelerate the degradation of HMGCR." evidence="9">
    <original>D</original>
    <variation>A</variation>
    <location>
        <position position="205"/>
    </location>
</feature>
<feature type="mutagenesis site" description="Abolished phosphorylation by PCK1, does not affect oxysterol-binding, does not affect the interaction with SCAP." evidence="17">
    <original>S</original>
    <variation>A</variation>
    <location>
        <position position="207"/>
    </location>
</feature>
<feature type="mutagenesis site" description="Phosphomimetic mutant, reduced binding to oxysterol." evidence="17">
    <original>S</original>
    <variation>E</variation>
    <location>
        <position position="207"/>
    </location>
</feature>
<feature type="sequence conflict" description="In Ref. 1; AAB69121." evidence="22" ref="1">
    <original>AA</original>
    <variation>PP</variation>
    <location>
        <begin position="31"/>
        <end position="32"/>
    </location>
</feature>
<feature type="sequence conflict" description="In Ref. 1; AAB69121." evidence="22" ref="1">
    <original>A</original>
    <variation>T</variation>
    <location>
        <position position="99"/>
    </location>
</feature>
<feature type="sequence conflict" description="In Ref. 1; AAB69121." evidence="22" ref="1">
    <original>VFV</original>
    <variation>GFG</variation>
    <location>
        <begin position="170"/>
        <end position="172"/>
    </location>
</feature>
<name>INSI1_HUMAN</name>
<proteinExistence type="evidence at protein level"/>
<keyword id="KW-0002">3D-structure</keyword>
<keyword id="KW-0025">Alternative splicing</keyword>
<keyword id="KW-0153">Cholesterol metabolism</keyword>
<keyword id="KW-0903">Direct protein sequencing</keyword>
<keyword id="KW-0256">Endoplasmic reticulum</keyword>
<keyword id="KW-1017">Isopeptide bond</keyword>
<keyword id="KW-0443">Lipid metabolism</keyword>
<keyword id="KW-0446">Lipid-binding</keyword>
<keyword id="KW-0472">Membrane</keyword>
<keyword id="KW-0597">Phosphoprotein</keyword>
<keyword id="KW-1267">Proteomics identification</keyword>
<keyword id="KW-1185">Reference proteome</keyword>
<keyword id="KW-0753">Steroid metabolism</keyword>
<keyword id="KW-1207">Sterol metabolism</keyword>
<keyword id="KW-0812">Transmembrane</keyword>
<keyword id="KW-1133">Transmembrane helix</keyword>
<keyword id="KW-0832">Ubl conjugation</keyword>
<gene>
    <name evidence="20 24" type="primary">INSIG1</name>
</gene>
<reference key="1">
    <citation type="journal article" date="1997" name="Genomics">
        <title>Cloning, human chromosomal assignment, and adipose and hepatic expression of the CL-6/INSIG1 gene.</title>
        <authorList>
            <person name="Peng Y."/>
            <person name="Schwarz E.J."/>
            <person name="Lazar M.A."/>
            <person name="Genin A."/>
            <person name="Spinner N.B."/>
            <person name="Taub R."/>
        </authorList>
    </citation>
    <scope>NUCLEOTIDE SEQUENCE [GENOMIC DNA]</scope>
    <scope>VARIANT THR-27</scope>
    <scope>INDUCTION</scope>
</reference>
<reference key="2">
    <citation type="journal article" date="2002" name="Cell">
        <title>Crucial step in cholesterol homeostasis: sterols promote binding of SCAP to INSIG-1, a membrane protein that facilitates retention of SREBPs in ER.</title>
        <authorList>
            <person name="Yang T."/>
            <person name="Espenshade P.J."/>
            <person name="Wright M.E."/>
            <person name="Yabe D."/>
            <person name="Gong Y."/>
            <person name="Aebersold R."/>
            <person name="Goldstein J.L."/>
            <person name="Brown M.S."/>
        </authorList>
    </citation>
    <scope>NUCLEOTIDE SEQUENCE [MRNA] (ISOFORM 1)</scope>
    <scope>PROTEIN SEQUENCE OF 40-61 AND 64-83</scope>
    <scope>IDENTIFICATION BY MASS SPECTROMETRY</scope>
    <scope>FUNCTION</scope>
    <scope>SUBCELLULAR LOCATION</scope>
    <scope>TISSUE SPECIFICITY</scope>
    <scope>INTERACTION WITH SCAP AND SREBP2 COMPLEX</scope>
</reference>
<reference key="3">
    <citation type="submission" date="2003-05" db="EMBL/GenBank/DDBJ databases">
        <title>Cloning of human full-length CDSs in BD Creator(TM) system donor vector.</title>
        <authorList>
            <person name="Kalnine N."/>
            <person name="Chen X."/>
            <person name="Rolfs A."/>
            <person name="Halleck A."/>
            <person name="Hines L."/>
            <person name="Eisenstein S."/>
            <person name="Koundinya M."/>
            <person name="Raphael J."/>
            <person name="Moreira D."/>
            <person name="Kelley T."/>
            <person name="LaBaer J."/>
            <person name="Lin Y."/>
            <person name="Phelan M."/>
            <person name="Farmer A."/>
        </authorList>
    </citation>
    <scope>NUCLEOTIDE SEQUENCE [LARGE SCALE MRNA] (ISOFORM 1)</scope>
</reference>
<reference key="4">
    <citation type="journal article" date="2004" name="Nat. Genet.">
        <title>Complete sequencing and characterization of 21,243 full-length human cDNAs.</title>
        <authorList>
            <person name="Ota T."/>
            <person name="Suzuki Y."/>
            <person name="Nishikawa T."/>
            <person name="Otsuki T."/>
            <person name="Sugiyama T."/>
            <person name="Irie R."/>
            <person name="Wakamatsu A."/>
            <person name="Hayashi K."/>
            <person name="Sato H."/>
            <person name="Nagai K."/>
            <person name="Kimura K."/>
            <person name="Makita H."/>
            <person name="Sekine M."/>
            <person name="Obayashi M."/>
            <person name="Nishi T."/>
            <person name="Shibahara T."/>
            <person name="Tanaka T."/>
            <person name="Ishii S."/>
            <person name="Yamamoto J."/>
            <person name="Saito K."/>
            <person name="Kawai Y."/>
            <person name="Isono Y."/>
            <person name="Nakamura Y."/>
            <person name="Nagahari K."/>
            <person name="Murakami K."/>
            <person name="Yasuda T."/>
            <person name="Iwayanagi T."/>
            <person name="Wagatsuma M."/>
            <person name="Shiratori A."/>
            <person name="Sudo H."/>
            <person name="Hosoiri T."/>
            <person name="Kaku Y."/>
            <person name="Kodaira H."/>
            <person name="Kondo H."/>
            <person name="Sugawara M."/>
            <person name="Takahashi M."/>
            <person name="Kanda K."/>
            <person name="Yokoi T."/>
            <person name="Furuya T."/>
            <person name="Kikkawa E."/>
            <person name="Omura Y."/>
            <person name="Abe K."/>
            <person name="Kamihara K."/>
            <person name="Katsuta N."/>
            <person name="Sato K."/>
            <person name="Tanikawa M."/>
            <person name="Yamazaki M."/>
            <person name="Ninomiya K."/>
            <person name="Ishibashi T."/>
            <person name="Yamashita H."/>
            <person name="Murakawa K."/>
            <person name="Fujimori K."/>
            <person name="Tanai H."/>
            <person name="Kimata M."/>
            <person name="Watanabe M."/>
            <person name="Hiraoka S."/>
            <person name="Chiba Y."/>
            <person name="Ishida S."/>
            <person name="Ono Y."/>
            <person name="Takiguchi S."/>
            <person name="Watanabe S."/>
            <person name="Yosida M."/>
            <person name="Hotuta T."/>
            <person name="Kusano J."/>
            <person name="Kanehori K."/>
            <person name="Takahashi-Fujii A."/>
            <person name="Hara H."/>
            <person name="Tanase T.-O."/>
            <person name="Nomura Y."/>
            <person name="Togiya S."/>
            <person name="Komai F."/>
            <person name="Hara R."/>
            <person name="Takeuchi K."/>
            <person name="Arita M."/>
            <person name="Imose N."/>
            <person name="Musashino K."/>
            <person name="Yuuki H."/>
            <person name="Oshima A."/>
            <person name="Sasaki N."/>
            <person name="Aotsuka S."/>
            <person name="Yoshikawa Y."/>
            <person name="Matsunawa H."/>
            <person name="Ichihara T."/>
            <person name="Shiohata N."/>
            <person name="Sano S."/>
            <person name="Moriya S."/>
            <person name="Momiyama H."/>
            <person name="Satoh N."/>
            <person name="Takami S."/>
            <person name="Terashima Y."/>
            <person name="Suzuki O."/>
            <person name="Nakagawa S."/>
            <person name="Senoh A."/>
            <person name="Mizoguchi H."/>
            <person name="Goto Y."/>
            <person name="Shimizu F."/>
            <person name="Wakebe H."/>
            <person name="Hishigaki H."/>
            <person name="Watanabe T."/>
            <person name="Sugiyama A."/>
            <person name="Takemoto M."/>
            <person name="Kawakami B."/>
            <person name="Yamazaki M."/>
            <person name="Watanabe K."/>
            <person name="Kumagai A."/>
            <person name="Itakura S."/>
            <person name="Fukuzumi Y."/>
            <person name="Fujimori Y."/>
            <person name="Komiyama M."/>
            <person name="Tashiro H."/>
            <person name="Tanigami A."/>
            <person name="Fujiwara T."/>
            <person name="Ono T."/>
            <person name="Yamada K."/>
            <person name="Fujii Y."/>
            <person name="Ozaki K."/>
            <person name="Hirao M."/>
            <person name="Ohmori Y."/>
            <person name="Kawabata A."/>
            <person name="Hikiji T."/>
            <person name="Kobatake N."/>
            <person name="Inagaki H."/>
            <person name="Ikema Y."/>
            <person name="Okamoto S."/>
            <person name="Okitani R."/>
            <person name="Kawakami T."/>
            <person name="Noguchi S."/>
            <person name="Itoh T."/>
            <person name="Shigeta K."/>
            <person name="Senba T."/>
            <person name="Matsumura K."/>
            <person name="Nakajima Y."/>
            <person name="Mizuno T."/>
            <person name="Morinaga M."/>
            <person name="Sasaki M."/>
            <person name="Togashi T."/>
            <person name="Oyama M."/>
            <person name="Hata H."/>
            <person name="Watanabe M."/>
            <person name="Komatsu T."/>
            <person name="Mizushima-Sugano J."/>
            <person name="Satoh T."/>
            <person name="Shirai Y."/>
            <person name="Takahashi Y."/>
            <person name="Nakagawa K."/>
            <person name="Okumura K."/>
            <person name="Nagase T."/>
            <person name="Nomura N."/>
            <person name="Kikuchi H."/>
            <person name="Masuho Y."/>
            <person name="Yamashita R."/>
            <person name="Nakai K."/>
            <person name="Yada T."/>
            <person name="Nakamura Y."/>
            <person name="Ohara O."/>
            <person name="Isogai T."/>
            <person name="Sugano S."/>
        </authorList>
    </citation>
    <scope>NUCLEOTIDE SEQUENCE [LARGE SCALE MRNA] (ISOFORM 1)</scope>
    <source>
        <tissue>Placenta</tissue>
    </source>
</reference>
<reference key="5">
    <citation type="submission" date="2005-05" db="EMBL/GenBank/DDBJ databases">
        <title>High-throughput cloning of full-length human cDNAs directly from cDNA libraries optimized for large and rare transcripts.</title>
        <authorList>
            <person name="Birkett C."/>
            <person name="Cho J."/>
            <person name="Gau Y."/>
            <person name="Hamer R."/>
            <person name="Kelly S."/>
            <person name="Kovacs K."/>
            <person name="Liu L."/>
            <person name="Liu X."/>
            <person name="Porter J."/>
            <person name="Sachs A."/>
            <person name="Shu Y."/>
            <person name="Sun Z."/>
            <person name="Wong J."/>
            <person name="Wu M."/>
            <person name="Zhang X."/>
            <person name="Jay G."/>
            <person name="He W."/>
        </authorList>
    </citation>
    <scope>NUCLEOTIDE SEQUENCE [LARGE SCALE MRNA] (ISOFORM 2)</scope>
    <source>
        <tissue>Mammary tumor</tissue>
    </source>
</reference>
<reference key="6">
    <citation type="journal article" date="2003" name="Science">
        <title>Human chromosome 7: DNA sequence and biology.</title>
        <authorList>
            <person name="Scherer S.W."/>
            <person name="Cheung J."/>
            <person name="MacDonald J.R."/>
            <person name="Osborne L.R."/>
            <person name="Nakabayashi K."/>
            <person name="Herbrick J.-A."/>
            <person name="Carson A.R."/>
            <person name="Parker-Katiraee L."/>
            <person name="Skaug J."/>
            <person name="Khaja R."/>
            <person name="Zhang J."/>
            <person name="Hudek A.K."/>
            <person name="Li M."/>
            <person name="Haddad M."/>
            <person name="Duggan G.E."/>
            <person name="Fernandez B.A."/>
            <person name="Kanematsu E."/>
            <person name="Gentles S."/>
            <person name="Christopoulos C.C."/>
            <person name="Choufani S."/>
            <person name="Kwasnicka D."/>
            <person name="Zheng X.H."/>
            <person name="Lai Z."/>
            <person name="Nusskern D.R."/>
            <person name="Zhang Q."/>
            <person name="Gu Z."/>
            <person name="Lu F."/>
            <person name="Zeesman S."/>
            <person name="Nowaczyk M.J."/>
            <person name="Teshima I."/>
            <person name="Chitayat D."/>
            <person name="Shuman C."/>
            <person name="Weksberg R."/>
            <person name="Zackai E.H."/>
            <person name="Grebe T.A."/>
            <person name="Cox S.R."/>
            <person name="Kirkpatrick S.J."/>
            <person name="Rahman N."/>
            <person name="Friedman J.M."/>
            <person name="Heng H.H.Q."/>
            <person name="Pelicci P.G."/>
            <person name="Lo-Coco F."/>
            <person name="Belloni E."/>
            <person name="Shaffer L.G."/>
            <person name="Pober B."/>
            <person name="Morton C.C."/>
            <person name="Gusella J.F."/>
            <person name="Bruns G.A.P."/>
            <person name="Korf B.R."/>
            <person name="Quade B.J."/>
            <person name="Ligon A.H."/>
            <person name="Ferguson H."/>
            <person name="Higgins A.W."/>
            <person name="Leach N.T."/>
            <person name="Herrick S.R."/>
            <person name="Lemyre E."/>
            <person name="Farra C.G."/>
            <person name="Kim H.-G."/>
            <person name="Summers A.M."/>
            <person name="Gripp K.W."/>
            <person name="Roberts W."/>
            <person name="Szatmari P."/>
            <person name="Winsor E.J.T."/>
            <person name="Grzeschik K.-H."/>
            <person name="Teebi A."/>
            <person name="Minassian B.A."/>
            <person name="Kere J."/>
            <person name="Armengol L."/>
            <person name="Pujana M.A."/>
            <person name="Estivill X."/>
            <person name="Wilson M.D."/>
            <person name="Koop B.F."/>
            <person name="Tosi S."/>
            <person name="Moore G.E."/>
            <person name="Boright A.P."/>
            <person name="Zlotorynski E."/>
            <person name="Kerem B."/>
            <person name="Kroisel P.M."/>
            <person name="Petek E."/>
            <person name="Oscier D.G."/>
            <person name="Mould S.J."/>
            <person name="Doehner H."/>
            <person name="Doehner K."/>
            <person name="Rommens J.M."/>
            <person name="Vincent J.B."/>
            <person name="Venter J.C."/>
            <person name="Li P.W."/>
            <person name="Mural R.J."/>
            <person name="Adams M.D."/>
            <person name="Tsui L.-C."/>
        </authorList>
    </citation>
    <scope>NUCLEOTIDE SEQUENCE [LARGE SCALE GENOMIC DNA]</scope>
</reference>
<reference key="7">
    <citation type="submission" date="2005-07" db="EMBL/GenBank/DDBJ databases">
        <authorList>
            <person name="Mural R.J."/>
            <person name="Istrail S."/>
            <person name="Sutton G.G."/>
            <person name="Florea L."/>
            <person name="Halpern A.L."/>
            <person name="Mobarry C.M."/>
            <person name="Lippert R."/>
            <person name="Walenz B."/>
            <person name="Shatkay H."/>
            <person name="Dew I."/>
            <person name="Miller J.R."/>
            <person name="Flanigan M.J."/>
            <person name="Edwards N.J."/>
            <person name="Bolanos R."/>
            <person name="Fasulo D."/>
            <person name="Halldorsson B.V."/>
            <person name="Hannenhalli S."/>
            <person name="Turner R."/>
            <person name="Yooseph S."/>
            <person name="Lu F."/>
            <person name="Nusskern D.R."/>
            <person name="Shue B.C."/>
            <person name="Zheng X.H."/>
            <person name="Zhong F."/>
            <person name="Delcher A.L."/>
            <person name="Huson D.H."/>
            <person name="Kravitz S.A."/>
            <person name="Mouchard L."/>
            <person name="Reinert K."/>
            <person name="Remington K.A."/>
            <person name="Clark A.G."/>
            <person name="Waterman M.S."/>
            <person name="Eichler E.E."/>
            <person name="Adams M.D."/>
            <person name="Hunkapiller M.W."/>
            <person name="Myers E.W."/>
            <person name="Venter J.C."/>
        </authorList>
    </citation>
    <scope>NUCLEOTIDE SEQUENCE [LARGE SCALE GENOMIC DNA]</scope>
</reference>
<reference key="8">
    <citation type="journal article" date="2004" name="Genome Res.">
        <title>The status, quality, and expansion of the NIH full-length cDNA project: the Mammalian Gene Collection (MGC).</title>
        <authorList>
            <consortium name="The MGC Project Team"/>
        </authorList>
    </citation>
    <scope>NUCLEOTIDE SEQUENCE [LARGE SCALE MRNA] (ISOFORM 1)</scope>
    <source>
        <tissue>Skin</tissue>
    </source>
</reference>
<reference key="9">
    <citation type="journal article" date="2003" name="Mol. Cell">
        <title>Accelerated degradation of HMG CoA reductase mediated by binding of insig-1 to its sterol-sensing domain.</title>
        <authorList>
            <person name="Sever N."/>
            <person name="Yang T."/>
            <person name="Brown M.S."/>
            <person name="Goldstein J.L."/>
            <person name="DeBose-Boyd R.A."/>
        </authorList>
    </citation>
    <scope>INTERACTION WITH HMGCR</scope>
    <scope>FUNCTION</scope>
</reference>
<reference key="10">
    <citation type="journal article" date="2004" name="J. Biol. Chem.">
        <title>Membrane topology of human insig-1, a protein regulator of lipid synthesis.</title>
        <authorList>
            <person name="Feramisco J.D."/>
            <person name="Goldstein J.L."/>
            <person name="Brown M.S."/>
        </authorList>
    </citation>
    <scope>TOPOLOGY</scope>
</reference>
<reference key="11">
    <citation type="journal article" date="2005" name="J. Biol. Chem.">
        <title>Insig required for sterol-mediated inhibition of Scap/SREBP binding to COPII proteins in vitro.</title>
        <authorList>
            <person name="Sun L.-P."/>
            <person name="Li L."/>
            <person name="Goldstein J.L."/>
            <person name="Brown M.S."/>
        </authorList>
    </citation>
    <scope>FUNCTION</scope>
    <scope>INTERACTION WITH SCAP</scope>
</reference>
<reference key="12">
    <citation type="journal article" date="2005" name="Mol. Cell">
        <title>Gp78, a membrane-anchored ubiquitin ligase, associates with Insig-1 and couples sterol-regulated ubiquitination to degradation of HMG CoA reductase.</title>
        <authorList>
            <person name="Song B.L."/>
            <person name="Sever N."/>
            <person name="DeBose-Boyd R.A."/>
        </authorList>
    </citation>
    <scope>INTERACTION WITH AMFR</scope>
    <scope>FUNCTION</scope>
</reference>
<reference key="13">
    <citation type="journal article" date="2006" name="Cell Metab.">
        <title>Sterol-regulated ubiquitination and degradation of Insig-1 creates a convergent mechanism for feedback control of cholesterol synthesis and uptake.</title>
        <authorList>
            <person name="Gong Y."/>
            <person name="Lee J.N."/>
            <person name="Lee P.C."/>
            <person name="Goldstein J.L."/>
            <person name="Brown M.S."/>
            <person name="Ye J."/>
        </authorList>
    </citation>
    <scope>FUNCTION</scope>
    <scope>INTERACTION WITH SCAP AND SREBP2 COMPLEX</scope>
    <scope>UBIQUITINATION AT LYS-156 AND LYS-158</scope>
    <scope>MUTAGENESIS OF LYS-156 AND LYS-158</scope>
</reference>
<reference key="14">
    <citation type="journal article" date="2006" name="J. Biol. Chem.">
        <title>Sterol-regulated degradation of Insig-1 mediated by the membrane-bound ubiquitin ligase gp78.</title>
        <authorList>
            <person name="Lee J.N."/>
            <person name="Song B."/>
            <person name="DeBose-Boyd R.A."/>
            <person name="Ye J."/>
        </authorList>
    </citation>
    <scope>UBIQUITINATION</scope>
</reference>
<reference key="15">
    <citation type="journal article" date="2006" name="Proc. Natl. Acad. Sci. U.S.A.">
        <title>Juxtamembranous aspartic acid in Insig-1 and Insig-2 is required for cholesterol homeostasis.</title>
        <authorList>
            <person name="Gong Y."/>
            <person name="Lee J.N."/>
            <person name="Brown M.S."/>
            <person name="Goldstein J.L."/>
            <person name="Ye J."/>
        </authorList>
    </citation>
    <scope>FUNCTION</scope>
    <scope>MUTAGENESIS OF ASP-205</scope>
</reference>
<reference key="16">
    <citation type="journal article" date="2010" name="Mol. Cancer Res.">
        <title>The TRC8 ubiquitin ligase is sterol regulated and interacts with lipid and protein biosynthetic pathways.</title>
        <authorList>
            <person name="Lee J.P."/>
            <person name="Brauweiler A."/>
            <person name="Rudolph M."/>
            <person name="Hooper J.E."/>
            <person name="Drabkin H.A."/>
            <person name="Gemmill R.M."/>
        </authorList>
    </citation>
    <scope>INTERACTION WITH RNF139</scope>
    <scope>UBIQUITINATION BY RNF139</scope>
</reference>
<reference key="17">
    <citation type="journal article" date="2011" name="Proc. Natl. Acad. Sci. U.S.A.">
        <title>Sterol-induced degradation of HMG CoA reductase depends on interplay of two Insigs and two ubiquitin ligases, gp78 and Trc8.</title>
        <authorList>
            <person name="Jo Y."/>
            <person name="Lee P.C."/>
            <person name="Sguigna P.V."/>
            <person name="DeBose-Boyd R.A."/>
        </authorList>
    </citation>
    <scope>FUNCTION</scope>
    <scope>INTERACTION WITH AMFR AND RNF139</scope>
</reference>
<reference key="18">
    <citation type="journal article" date="2015" name="Nat. Commun.">
        <title>PAQR3 modulates cholesterol homeostasis by anchoring Scap/SREBP complex to the Golgi apparatus.</title>
        <authorList>
            <person name="Xu D."/>
            <person name="Wang Z."/>
            <person name="Zhang Y."/>
            <person name="Jiang W."/>
            <person name="Pan Y."/>
            <person name="Song B.L."/>
            <person name="Chen Y."/>
        </authorList>
    </citation>
    <scope>FUNCTION</scope>
    <scope>INTERACTION WITH SCAP</scope>
</reference>
<reference key="19">
    <citation type="journal article" date="2017" name="Nat. Cell Biol.">
        <title>Cholesterol and fatty acids regulate cysteine ubiquitylation of ACAT2 through competitive oxidation.</title>
        <authorList>
            <person name="Wang Y.J."/>
            <person name="Bian Y."/>
            <person name="Luo J."/>
            <person name="Lu M."/>
            <person name="Xiong Y."/>
            <person name="Guo S.Y."/>
            <person name="Yin H.Y."/>
            <person name="Lin X."/>
            <person name="Li Q."/>
            <person name="Chang C.C.Y."/>
            <person name="Chang T.Y."/>
            <person name="Li B.L."/>
            <person name="Song B.L."/>
        </authorList>
    </citation>
    <scope>FUNCTION</scope>
    <scope>INTERACTION WITH SOAT2</scope>
</reference>
<reference key="20">
    <citation type="journal article" date="2017" name="Nat. Cell Biol.">
        <title>Corrigendum: Cholesterol and fatty acids regulate cysteine ubiquitylation of ACAT2 through competitive oxidation.</title>
        <authorList>
            <person name="Wang Y.J."/>
            <person name="Bian Y."/>
            <person name="Luo J."/>
            <person name="Lu M."/>
            <person name="Xiong Y."/>
            <person name="Guo S.Y."/>
            <person name="Yong H."/>
            <person name="Lin X."/>
            <person name="Li Q."/>
            <person name="Chang C.C.Y."/>
            <person name="Chang T.Y."/>
            <person name="Li B.L."/>
            <person name="Song B.L."/>
        </authorList>
    </citation>
    <scope>ERRATUM OF PUBMED:28604676</scope>
</reference>
<reference key="21">
    <citation type="journal article" date="2017" name="Nat. Rev. Endocrinol.">
        <title>SREBP-regulated lipid metabolism: convergent physiology - divergent pathophysiology.</title>
        <authorList>
            <person name="Shimano H."/>
            <person name="Sato R."/>
        </authorList>
    </citation>
    <scope>REVIEW</scope>
</reference>
<reference key="22">
    <citation type="journal article" date="2018" name="J. Biol. Chem.">
        <title>Ring finger protein 145 (RNF145) is a ubiquitin ligase for sterol-induced degradation of HMG-CoA reductase.</title>
        <authorList>
            <person name="Jiang L.Y."/>
            <person name="Jiang W."/>
            <person name="Tian N."/>
            <person name="Xiong Y.N."/>
            <person name="Liu J."/>
            <person name="Wei J."/>
            <person name="Wu K.Y."/>
            <person name="Luo J."/>
            <person name="Shi X.J."/>
            <person name="Song B.L."/>
        </authorList>
    </citation>
    <scope>INTERACTION WITH RNF145</scope>
</reference>
<reference key="23">
    <citation type="journal article" date="2020" name="Nature">
        <title>The gluconeogenic enzyme PCK1 phosphorylates INSIG1/2 for lipogenesis.</title>
        <authorList>
            <person name="Xu D."/>
            <person name="Wang Z."/>
            <person name="Xia Y."/>
            <person name="Shao F."/>
            <person name="Xia W."/>
            <person name="Wei Y."/>
            <person name="Li X."/>
            <person name="Qian X."/>
            <person name="Lee J.H."/>
            <person name="Du L."/>
            <person name="Zheng Y."/>
            <person name="Lv G."/>
            <person name="Leu J.S."/>
            <person name="Wang H."/>
            <person name="Xing D."/>
            <person name="Liang T."/>
            <person name="Hung M.C."/>
            <person name="Lu Z."/>
        </authorList>
    </citation>
    <scope>FUNCTION</scope>
    <scope>LIPID-BINDING</scope>
    <scope>SUBCELLULAR LOCATION</scope>
    <scope>INTERACTION WITH SCAP</scope>
    <scope>PHOSPHORYLATION AT SER-207</scope>
    <scope>MUTAGENESIS OF SER-207</scope>
</reference>
<reference key="24">
    <citation type="journal article" date="2013" name="EMBO J.">
        <title>Rules for the recognition of dilysine retrieval motifs by coatomer.</title>
        <authorList>
            <person name="Ma W."/>
            <person name="Goldberg J."/>
        </authorList>
    </citation>
    <scope>X-RAY CRYSTALLOGRAPHY (1.74 ANGSTROMS) OF 273-277</scope>
    <scope>DOMAIN</scope>
</reference>